<reference key="1">
    <citation type="journal article" date="2002" name="DNA Res.">
        <title>Complete genome structure of the thermophilic cyanobacterium Thermosynechococcus elongatus BP-1.</title>
        <authorList>
            <person name="Nakamura Y."/>
            <person name="Kaneko T."/>
            <person name="Sato S."/>
            <person name="Ikeuchi M."/>
            <person name="Katoh H."/>
            <person name="Sasamoto S."/>
            <person name="Watanabe A."/>
            <person name="Iriguchi M."/>
            <person name="Kawashima K."/>
            <person name="Kimura T."/>
            <person name="Kishida Y."/>
            <person name="Kiyokawa C."/>
            <person name="Kohara M."/>
            <person name="Matsumoto M."/>
            <person name="Matsuno A."/>
            <person name="Nakazaki N."/>
            <person name="Shimpo S."/>
            <person name="Sugimoto M."/>
            <person name="Takeuchi C."/>
            <person name="Yamada M."/>
            <person name="Tabata S."/>
        </authorList>
    </citation>
    <scope>NUCLEOTIDE SEQUENCE [LARGE SCALE GENOMIC DNA]</scope>
    <source>
        <strain>NIES-2133 / IAM M-273 / BP-1</strain>
    </source>
</reference>
<proteinExistence type="inferred from homology"/>
<keyword id="KW-0030">Aminoacyl-tRNA synthetase</keyword>
<keyword id="KW-0067">ATP-binding</keyword>
<keyword id="KW-0963">Cytoplasm</keyword>
<keyword id="KW-0436">Ligase</keyword>
<keyword id="KW-0547">Nucleotide-binding</keyword>
<keyword id="KW-0648">Protein biosynthesis</keyword>
<keyword id="KW-1185">Reference proteome</keyword>
<evidence type="ECO:0000255" key="1">
    <source>
        <dbReference type="HAMAP-Rule" id="MF_00049"/>
    </source>
</evidence>
<accession>Q8DH61</accession>
<gene>
    <name evidence="1" type="primary">leuS</name>
    <name type="ordered locus">tll2098</name>
</gene>
<sequence>MDDRYDPQVIEAKWQQEWAARQLDRTDTDPQKPKFYALSMFPYPSGNLHMGHVRNYTITDVIARCRRMQGYRVLHPMGWDAFGLPAENAAIERGIHPRVWTQQNIGQMRQELQRLGLSYDWEREVTTCHPDYYRWTQWLFLEFFEAGLAYQKEAAVNWDPVDQTVLANEQVDSEGRSWRSGALVERRLLKQWFLKITAYAEELLNDLEQLTGWPERVKLMQANWIGQSRGAYLEFPIVGSDEKIGVFTTRPDTVYGVTYVVLAPEHPLTLKVTTSRRRKTVEAFIASVQQESELERTAGDRPKRGVATGGKALNPFTGEEIPIWIANYVLYEYGTGAVMGVPAHDERDFQFAKAHRLPIRQVIIPPDGKASTRLRAAYTEPGKLINSGQFDGMDSTAAKVAITEYATAQGWGREHVQYRLRDWLISRQRYWGVPIPIIHCPQCGPVPVPRSELPVLLPEEVEFTGRGPSPLAKLAAWRDVPCPKCGGPAQRETDTMDTFIDSSWYYFRYADARNSEAPFDPAAIKDWLPVDQYVGGIEHAILHLLYSRFFTKVLRDRQLVHVSEPFQRLLTQGMVQGRTYKNPRTGKYVIPSRIADLNQPTDPDTGEALEVVYEKMSKSKYNGVAPGDVIQQYGADTARMFILFKAPPEKDLEWDDADVEGQFRFLNRVWRLVQTFKAKGGRLGQPLPATLTKAEKDLRRAIHTAIKEISEDIEGDYQLNTAVAELMKLSNALSSADCYTSGVYSEGIQTLLTLLAPFAPHISEELWHQLGGTDSIHRQPWPKADPTALVADEITLVIQVMGKTRGAIQVPATASQAELEEAAQHSEIGQRYLAGKTIKKIIVVPGKLVNFVLESSR</sequence>
<feature type="chain" id="PRO_0000152102" description="Leucine--tRNA ligase">
    <location>
        <begin position="1"/>
        <end position="857"/>
    </location>
</feature>
<feature type="short sequence motif" description="'HIGH' region">
    <location>
        <begin position="42"/>
        <end position="52"/>
    </location>
</feature>
<feature type="short sequence motif" description="'KMSKS' region">
    <location>
        <begin position="615"/>
        <end position="619"/>
    </location>
</feature>
<feature type="binding site" evidence="1">
    <location>
        <position position="618"/>
    </location>
    <ligand>
        <name>ATP</name>
        <dbReference type="ChEBI" id="CHEBI:30616"/>
    </ligand>
</feature>
<dbReference type="EC" id="6.1.1.4" evidence="1"/>
<dbReference type="EMBL" id="BA000039">
    <property type="protein sequence ID" value="BAC09650.1"/>
    <property type="molecule type" value="Genomic_DNA"/>
</dbReference>
<dbReference type="RefSeq" id="NP_682888.1">
    <property type="nucleotide sequence ID" value="NC_004113.1"/>
</dbReference>
<dbReference type="RefSeq" id="WP_011057933.1">
    <property type="nucleotide sequence ID" value="NC_004113.1"/>
</dbReference>
<dbReference type="SMR" id="Q8DH61"/>
<dbReference type="STRING" id="197221.gene:10748708"/>
<dbReference type="EnsemblBacteria" id="BAC09650">
    <property type="protein sequence ID" value="BAC09650"/>
    <property type="gene ID" value="BAC09650"/>
</dbReference>
<dbReference type="KEGG" id="tel:tll2098"/>
<dbReference type="PATRIC" id="fig|197221.4.peg.2196"/>
<dbReference type="eggNOG" id="COG0495">
    <property type="taxonomic scope" value="Bacteria"/>
</dbReference>
<dbReference type="Proteomes" id="UP000000440">
    <property type="component" value="Chromosome"/>
</dbReference>
<dbReference type="GO" id="GO:0005829">
    <property type="term" value="C:cytosol"/>
    <property type="evidence" value="ECO:0007669"/>
    <property type="project" value="TreeGrafter"/>
</dbReference>
<dbReference type="GO" id="GO:0002161">
    <property type="term" value="F:aminoacyl-tRNA deacylase activity"/>
    <property type="evidence" value="ECO:0007669"/>
    <property type="project" value="InterPro"/>
</dbReference>
<dbReference type="GO" id="GO:0005524">
    <property type="term" value="F:ATP binding"/>
    <property type="evidence" value="ECO:0007669"/>
    <property type="project" value="UniProtKB-UniRule"/>
</dbReference>
<dbReference type="GO" id="GO:0004823">
    <property type="term" value="F:leucine-tRNA ligase activity"/>
    <property type="evidence" value="ECO:0007669"/>
    <property type="project" value="UniProtKB-UniRule"/>
</dbReference>
<dbReference type="GO" id="GO:0006429">
    <property type="term" value="P:leucyl-tRNA aminoacylation"/>
    <property type="evidence" value="ECO:0007669"/>
    <property type="project" value="UniProtKB-UniRule"/>
</dbReference>
<dbReference type="CDD" id="cd07958">
    <property type="entry name" value="Anticodon_Ia_Leu_BEm"/>
    <property type="match status" value="1"/>
</dbReference>
<dbReference type="CDD" id="cd00812">
    <property type="entry name" value="LeuRS_core"/>
    <property type="match status" value="1"/>
</dbReference>
<dbReference type="FunFam" id="3.10.20.590:FF:000001">
    <property type="entry name" value="Leucine--tRNA ligase"/>
    <property type="match status" value="1"/>
</dbReference>
<dbReference type="FunFam" id="3.40.50.620:FF:000003">
    <property type="entry name" value="Leucine--tRNA ligase"/>
    <property type="match status" value="1"/>
</dbReference>
<dbReference type="FunFam" id="1.10.730.10:FF:000011">
    <property type="entry name" value="Leucine--tRNA ligase chloroplastic/mitochondrial"/>
    <property type="match status" value="1"/>
</dbReference>
<dbReference type="FunFam" id="3.40.50.620:FF:000100">
    <property type="entry name" value="probable leucine--tRNA ligase, mitochondrial"/>
    <property type="match status" value="1"/>
</dbReference>
<dbReference type="Gene3D" id="3.40.50.620">
    <property type="entry name" value="HUPs"/>
    <property type="match status" value="2"/>
</dbReference>
<dbReference type="Gene3D" id="1.10.730.10">
    <property type="entry name" value="Isoleucyl-tRNA Synthetase, Domain 1"/>
    <property type="match status" value="1"/>
</dbReference>
<dbReference type="HAMAP" id="MF_00049_B">
    <property type="entry name" value="Leu_tRNA_synth_B"/>
    <property type="match status" value="1"/>
</dbReference>
<dbReference type="InterPro" id="IPR001412">
    <property type="entry name" value="aa-tRNA-synth_I_CS"/>
</dbReference>
<dbReference type="InterPro" id="IPR002300">
    <property type="entry name" value="aa-tRNA-synth_Ia"/>
</dbReference>
<dbReference type="InterPro" id="IPR002302">
    <property type="entry name" value="Leu-tRNA-ligase"/>
</dbReference>
<dbReference type="InterPro" id="IPR025709">
    <property type="entry name" value="Leu_tRNA-synth_edit"/>
</dbReference>
<dbReference type="InterPro" id="IPR013155">
    <property type="entry name" value="M/V/L/I-tRNA-synth_anticd-bd"/>
</dbReference>
<dbReference type="InterPro" id="IPR015413">
    <property type="entry name" value="Methionyl/Leucyl_tRNA_Synth"/>
</dbReference>
<dbReference type="InterPro" id="IPR014729">
    <property type="entry name" value="Rossmann-like_a/b/a_fold"/>
</dbReference>
<dbReference type="InterPro" id="IPR009080">
    <property type="entry name" value="tRNAsynth_Ia_anticodon-bd"/>
</dbReference>
<dbReference type="InterPro" id="IPR009008">
    <property type="entry name" value="Val/Leu/Ile-tRNA-synth_edit"/>
</dbReference>
<dbReference type="NCBIfam" id="TIGR00396">
    <property type="entry name" value="leuS_bact"/>
    <property type="match status" value="1"/>
</dbReference>
<dbReference type="PANTHER" id="PTHR43740:SF2">
    <property type="entry name" value="LEUCINE--TRNA LIGASE, MITOCHONDRIAL"/>
    <property type="match status" value="1"/>
</dbReference>
<dbReference type="PANTHER" id="PTHR43740">
    <property type="entry name" value="LEUCYL-TRNA SYNTHETASE"/>
    <property type="match status" value="1"/>
</dbReference>
<dbReference type="Pfam" id="PF08264">
    <property type="entry name" value="Anticodon_1"/>
    <property type="match status" value="1"/>
</dbReference>
<dbReference type="Pfam" id="PF00133">
    <property type="entry name" value="tRNA-synt_1"/>
    <property type="match status" value="2"/>
</dbReference>
<dbReference type="Pfam" id="PF13603">
    <property type="entry name" value="tRNA-synt_1_2"/>
    <property type="match status" value="1"/>
</dbReference>
<dbReference type="Pfam" id="PF09334">
    <property type="entry name" value="tRNA-synt_1g"/>
    <property type="match status" value="1"/>
</dbReference>
<dbReference type="PRINTS" id="PR00985">
    <property type="entry name" value="TRNASYNTHLEU"/>
</dbReference>
<dbReference type="SUPFAM" id="SSF47323">
    <property type="entry name" value="Anticodon-binding domain of a subclass of class I aminoacyl-tRNA synthetases"/>
    <property type="match status" value="1"/>
</dbReference>
<dbReference type="SUPFAM" id="SSF52374">
    <property type="entry name" value="Nucleotidylyl transferase"/>
    <property type="match status" value="1"/>
</dbReference>
<dbReference type="SUPFAM" id="SSF50677">
    <property type="entry name" value="ValRS/IleRS/LeuRS editing domain"/>
    <property type="match status" value="1"/>
</dbReference>
<dbReference type="PROSITE" id="PS00178">
    <property type="entry name" value="AA_TRNA_LIGASE_I"/>
    <property type="match status" value="1"/>
</dbReference>
<comment type="catalytic activity">
    <reaction evidence="1">
        <text>tRNA(Leu) + L-leucine + ATP = L-leucyl-tRNA(Leu) + AMP + diphosphate</text>
        <dbReference type="Rhea" id="RHEA:11688"/>
        <dbReference type="Rhea" id="RHEA-COMP:9613"/>
        <dbReference type="Rhea" id="RHEA-COMP:9622"/>
        <dbReference type="ChEBI" id="CHEBI:30616"/>
        <dbReference type="ChEBI" id="CHEBI:33019"/>
        <dbReference type="ChEBI" id="CHEBI:57427"/>
        <dbReference type="ChEBI" id="CHEBI:78442"/>
        <dbReference type="ChEBI" id="CHEBI:78494"/>
        <dbReference type="ChEBI" id="CHEBI:456215"/>
        <dbReference type="EC" id="6.1.1.4"/>
    </reaction>
</comment>
<comment type="subcellular location">
    <subcellularLocation>
        <location evidence="1">Cytoplasm</location>
    </subcellularLocation>
</comment>
<comment type="similarity">
    <text evidence="1">Belongs to the class-I aminoacyl-tRNA synthetase family.</text>
</comment>
<organism>
    <name type="scientific">Thermosynechococcus vestitus (strain NIES-2133 / IAM M-273 / BP-1)</name>
    <dbReference type="NCBI Taxonomy" id="197221"/>
    <lineage>
        <taxon>Bacteria</taxon>
        <taxon>Bacillati</taxon>
        <taxon>Cyanobacteriota</taxon>
        <taxon>Cyanophyceae</taxon>
        <taxon>Acaryochloridales</taxon>
        <taxon>Thermosynechococcaceae</taxon>
        <taxon>Thermosynechococcus</taxon>
    </lineage>
</organism>
<protein>
    <recommendedName>
        <fullName evidence="1">Leucine--tRNA ligase</fullName>
        <ecNumber evidence="1">6.1.1.4</ecNumber>
    </recommendedName>
    <alternativeName>
        <fullName evidence="1">Leucyl-tRNA synthetase</fullName>
        <shortName evidence="1">LeuRS</shortName>
    </alternativeName>
</protein>
<name>SYL_THEVB</name>